<organism>
    <name type="scientific">Escherichia coli (strain K12)</name>
    <dbReference type="NCBI Taxonomy" id="83333"/>
    <lineage>
        <taxon>Bacteria</taxon>
        <taxon>Pseudomonadati</taxon>
        <taxon>Pseudomonadota</taxon>
        <taxon>Gammaproteobacteria</taxon>
        <taxon>Enterobacterales</taxon>
        <taxon>Enterobacteriaceae</taxon>
        <taxon>Escherichia</taxon>
    </lineage>
</organism>
<sequence length="188" mass="20736">MSFTNTPERYGVISAAFHWLSAIIVYGMFALGLWMVTLSYYDGWYHKAPELHKSIGILLMMGLVIRVLWRVISPPPGPLPSYSPMTRLAARAGHLALYLLLFAIGISGYLISTADGKPISVFGWFDVPATLADAGAQADFAGALHFWLAWSVVVLSVMHGFMALKHHFIDKDDTLKRMLGKSSSDYGV</sequence>
<accession>P75925</accession>
<accession>Q47145</accession>
<feature type="chain" id="PRO_0000199975" description="Cytochrome b561 homolog 2">
    <location>
        <begin position="1"/>
        <end position="188"/>
    </location>
</feature>
<feature type="topological domain" description="Cytoplasmic" evidence="4">
    <location>
        <begin position="1"/>
        <end position="15"/>
    </location>
</feature>
<feature type="transmembrane region" description="Helical" evidence="2">
    <location>
        <begin position="16"/>
        <end position="36"/>
    </location>
</feature>
<feature type="topological domain" description="Periplasmic" evidence="4">
    <location>
        <begin position="37"/>
        <end position="54"/>
    </location>
</feature>
<feature type="transmembrane region" description="Helical" evidence="2">
    <location>
        <begin position="55"/>
        <end position="75"/>
    </location>
</feature>
<feature type="topological domain" description="Cytoplasmic" evidence="4">
    <location>
        <begin position="76"/>
        <end position="91"/>
    </location>
</feature>
<feature type="transmembrane region" description="Helical" evidence="2">
    <location>
        <begin position="92"/>
        <end position="112"/>
    </location>
</feature>
<feature type="topological domain" description="Periplasmic" evidence="4">
    <location>
        <begin position="113"/>
        <end position="143"/>
    </location>
</feature>
<feature type="transmembrane region" description="Helical" evidence="2">
    <location>
        <begin position="144"/>
        <end position="164"/>
    </location>
</feature>
<feature type="topological domain" description="Cytoplasmic" evidence="3">
    <location>
        <begin position="165"/>
        <end position="188"/>
    </location>
</feature>
<feature type="binding site" description="axial binding residue" evidence="1">
    <location>
        <position position="18"/>
    </location>
    <ligand>
        <name>heme b</name>
        <dbReference type="ChEBI" id="CHEBI:60344"/>
        <label>1</label>
    </ligand>
    <ligandPart>
        <name>Fe</name>
        <dbReference type="ChEBI" id="CHEBI:18248"/>
    </ligandPart>
</feature>
<feature type="binding site" description="axial binding residue" evidence="1">
    <location>
        <position position="52"/>
    </location>
    <ligand>
        <name>heme b</name>
        <dbReference type="ChEBI" id="CHEBI:60344"/>
        <label>2</label>
    </ligand>
    <ligandPart>
        <name>Fe</name>
        <dbReference type="ChEBI" id="CHEBI:18248"/>
    </ligandPart>
</feature>
<feature type="binding site" description="axial binding residue" evidence="1">
    <location>
        <position position="145"/>
    </location>
    <ligand>
        <name>heme b</name>
        <dbReference type="ChEBI" id="CHEBI:60344"/>
        <label>2</label>
    </ligand>
    <ligandPart>
        <name>Fe</name>
        <dbReference type="ChEBI" id="CHEBI:18248"/>
    </ligandPart>
</feature>
<feature type="binding site" description="axial binding residue" evidence="1">
    <location>
        <position position="159"/>
    </location>
    <ligand>
        <name>heme b</name>
        <dbReference type="ChEBI" id="CHEBI:60344"/>
        <label>1</label>
    </ligand>
    <ligandPart>
        <name>Fe</name>
        <dbReference type="ChEBI" id="CHEBI:18248"/>
    </ligandPart>
</feature>
<evidence type="ECO:0000250" key="1">
    <source>
        <dbReference type="UniProtKB" id="P0ABE5"/>
    </source>
</evidence>
<evidence type="ECO:0000255" key="2"/>
<evidence type="ECO:0000269" key="3">
    <source>
    </source>
</evidence>
<evidence type="ECO:0000305" key="4"/>
<name>C56H2_ECOLI</name>
<dbReference type="EMBL" id="U00096">
    <property type="protein sequence ID" value="AAC74141.1"/>
    <property type="molecule type" value="Genomic_DNA"/>
</dbReference>
<dbReference type="EMBL" id="AP009048">
    <property type="protein sequence ID" value="BAA35855.1"/>
    <property type="molecule type" value="Genomic_DNA"/>
</dbReference>
<dbReference type="EMBL" id="D31709">
    <property type="protein sequence ID" value="BAA06517.1"/>
    <property type="status" value="ALT_INIT"/>
    <property type="molecule type" value="Genomic_DNA"/>
</dbReference>
<dbReference type="PIR" id="F64848">
    <property type="entry name" value="F64848"/>
</dbReference>
<dbReference type="RefSeq" id="NP_415575.1">
    <property type="nucleotide sequence ID" value="NC_000913.3"/>
</dbReference>
<dbReference type="RefSeq" id="WP_000011114.1">
    <property type="nucleotide sequence ID" value="NZ_SSZK01000058.1"/>
</dbReference>
<dbReference type="SMR" id="P75925"/>
<dbReference type="BioGRID" id="4261751">
    <property type="interactions" value="6"/>
</dbReference>
<dbReference type="FunCoup" id="P75925">
    <property type="interactions" value="115"/>
</dbReference>
<dbReference type="STRING" id="511145.b1057"/>
<dbReference type="PaxDb" id="511145-b1057"/>
<dbReference type="DNASU" id="945628"/>
<dbReference type="EnsemblBacteria" id="AAC74141">
    <property type="protein sequence ID" value="AAC74141"/>
    <property type="gene ID" value="b1057"/>
</dbReference>
<dbReference type="GeneID" id="945628"/>
<dbReference type="KEGG" id="ecj:JW1044"/>
<dbReference type="KEGG" id="eco:b1057"/>
<dbReference type="KEGG" id="ecoc:C3026_06430"/>
<dbReference type="PATRIC" id="fig|1411691.4.peg.1212"/>
<dbReference type="EchoBASE" id="EB2526"/>
<dbReference type="eggNOG" id="COG3038">
    <property type="taxonomic scope" value="Bacteria"/>
</dbReference>
<dbReference type="HOGENOM" id="CLU_095321_4_1_6"/>
<dbReference type="InParanoid" id="P75925"/>
<dbReference type="OMA" id="WYKTAPH"/>
<dbReference type="OrthoDB" id="9793784at2"/>
<dbReference type="PhylomeDB" id="P75925"/>
<dbReference type="BioCyc" id="EcoCyc:G6554-MONOMER"/>
<dbReference type="PRO" id="PR:P75925"/>
<dbReference type="Proteomes" id="UP000000625">
    <property type="component" value="Chromosome"/>
</dbReference>
<dbReference type="GO" id="GO:0005886">
    <property type="term" value="C:plasma membrane"/>
    <property type="evidence" value="ECO:0000314"/>
    <property type="project" value="EcoCyc"/>
</dbReference>
<dbReference type="GO" id="GO:0009055">
    <property type="term" value="F:electron transfer activity"/>
    <property type="evidence" value="ECO:0007669"/>
    <property type="project" value="InterPro"/>
</dbReference>
<dbReference type="GO" id="GO:0020037">
    <property type="term" value="F:heme binding"/>
    <property type="evidence" value="ECO:0000318"/>
    <property type="project" value="GO_Central"/>
</dbReference>
<dbReference type="GO" id="GO:0046872">
    <property type="term" value="F:metal ion binding"/>
    <property type="evidence" value="ECO:0007669"/>
    <property type="project" value="UniProtKB-KW"/>
</dbReference>
<dbReference type="GO" id="GO:0022904">
    <property type="term" value="P:respiratory electron transport chain"/>
    <property type="evidence" value="ECO:0007669"/>
    <property type="project" value="InterPro"/>
</dbReference>
<dbReference type="FunFam" id="1.20.950.20:FF:000005">
    <property type="entry name" value="Putative cytochrome b561"/>
    <property type="match status" value="1"/>
</dbReference>
<dbReference type="Gene3D" id="1.20.950.20">
    <property type="entry name" value="Transmembrane di-heme cytochromes, Chain C"/>
    <property type="match status" value="1"/>
</dbReference>
<dbReference type="InterPro" id="IPR011577">
    <property type="entry name" value="Cyt_b561_bac/Ni-Hgenase"/>
</dbReference>
<dbReference type="InterPro" id="IPR052168">
    <property type="entry name" value="Cytochrome_b561_oxidase"/>
</dbReference>
<dbReference type="InterPro" id="IPR016174">
    <property type="entry name" value="Di-haem_cyt_TM"/>
</dbReference>
<dbReference type="PANTHER" id="PTHR30529">
    <property type="entry name" value="CYTOCHROME B561"/>
    <property type="match status" value="1"/>
</dbReference>
<dbReference type="PANTHER" id="PTHR30529:SF1">
    <property type="entry name" value="CYTOCHROME B561 HOMOLOG 2"/>
    <property type="match status" value="1"/>
</dbReference>
<dbReference type="Pfam" id="PF01292">
    <property type="entry name" value="Ni_hydr_CYTB"/>
    <property type="match status" value="1"/>
</dbReference>
<dbReference type="SUPFAM" id="SSF81342">
    <property type="entry name" value="Transmembrane di-heme cytochromes"/>
    <property type="match status" value="1"/>
</dbReference>
<proteinExistence type="evidence at protein level"/>
<protein>
    <recommendedName>
        <fullName>Cytochrome b561 homolog 2</fullName>
    </recommendedName>
</protein>
<reference key="1">
    <citation type="journal article" date="1996" name="DNA Res.">
        <title>A 718-kb DNA sequence of the Escherichia coli K-12 genome corresponding to the 12.7-28.0 min region on the linkage map.</title>
        <authorList>
            <person name="Oshima T."/>
            <person name="Aiba H."/>
            <person name="Baba T."/>
            <person name="Fujita K."/>
            <person name="Hayashi K."/>
            <person name="Honjo A."/>
            <person name="Ikemoto K."/>
            <person name="Inada T."/>
            <person name="Itoh T."/>
            <person name="Kajihara M."/>
            <person name="Kanai K."/>
            <person name="Kashimoto K."/>
            <person name="Kimura S."/>
            <person name="Kitagawa M."/>
            <person name="Makino K."/>
            <person name="Masuda S."/>
            <person name="Miki T."/>
            <person name="Mizobuchi K."/>
            <person name="Mori H."/>
            <person name="Motomura K."/>
            <person name="Nakamura Y."/>
            <person name="Nashimoto H."/>
            <person name="Nishio Y."/>
            <person name="Saito N."/>
            <person name="Sampei G."/>
            <person name="Seki Y."/>
            <person name="Tagami H."/>
            <person name="Takemoto K."/>
            <person name="Wada C."/>
            <person name="Yamamoto Y."/>
            <person name="Yano M."/>
            <person name="Horiuchi T."/>
        </authorList>
    </citation>
    <scope>NUCLEOTIDE SEQUENCE [LARGE SCALE GENOMIC DNA]</scope>
    <source>
        <strain>K12 / W3110 / ATCC 27325 / DSM 5911</strain>
    </source>
</reference>
<reference key="2">
    <citation type="journal article" date="1997" name="Science">
        <title>The complete genome sequence of Escherichia coli K-12.</title>
        <authorList>
            <person name="Blattner F.R."/>
            <person name="Plunkett G. III"/>
            <person name="Bloch C.A."/>
            <person name="Perna N.T."/>
            <person name="Burland V."/>
            <person name="Riley M."/>
            <person name="Collado-Vides J."/>
            <person name="Glasner J.D."/>
            <person name="Rode C.K."/>
            <person name="Mayhew G.F."/>
            <person name="Gregor J."/>
            <person name="Davis N.W."/>
            <person name="Kirkpatrick H.A."/>
            <person name="Goeden M.A."/>
            <person name="Rose D.J."/>
            <person name="Mau B."/>
            <person name="Shao Y."/>
        </authorList>
    </citation>
    <scope>NUCLEOTIDE SEQUENCE [LARGE SCALE GENOMIC DNA]</scope>
    <source>
        <strain>K12 / MG1655 / ATCC 47076</strain>
    </source>
</reference>
<reference key="3">
    <citation type="journal article" date="2006" name="Mol. Syst. Biol.">
        <title>Highly accurate genome sequences of Escherichia coli K-12 strains MG1655 and W3110.</title>
        <authorList>
            <person name="Hayashi K."/>
            <person name="Morooka N."/>
            <person name="Yamamoto Y."/>
            <person name="Fujita K."/>
            <person name="Isono K."/>
            <person name="Choi S."/>
            <person name="Ohtsubo E."/>
            <person name="Baba T."/>
            <person name="Wanner B.L."/>
            <person name="Mori H."/>
            <person name="Horiuchi T."/>
        </authorList>
    </citation>
    <scope>NUCLEOTIDE SEQUENCE [LARGE SCALE GENOMIC DNA]</scope>
    <source>
        <strain>K12 / W3110 / ATCC 27325 / DSM 5911</strain>
    </source>
</reference>
<reference key="4">
    <citation type="submission" date="1994-05" db="EMBL/GenBank/DDBJ databases">
        <authorList>
            <person name="Ohmori H."/>
        </authorList>
    </citation>
    <scope>NUCLEOTIDE SEQUENCE [GENOMIC DNA] OF 1-178</scope>
    <source>
        <strain>K12 / W3110 / ATCC 27325 / DSM 5911</strain>
    </source>
</reference>
<reference key="5">
    <citation type="journal article" date="2005" name="Science">
        <title>Global topology analysis of the Escherichia coli inner membrane proteome.</title>
        <authorList>
            <person name="Daley D.O."/>
            <person name="Rapp M."/>
            <person name="Granseth E."/>
            <person name="Melen K."/>
            <person name="Drew D."/>
            <person name="von Heijne G."/>
        </authorList>
    </citation>
    <scope>TOPOLOGY [LARGE SCALE ANALYSIS]</scope>
    <scope>SUBCELLULAR LOCATION</scope>
    <source>
        <strain>K12 / MG1655 / ATCC 47076</strain>
    </source>
</reference>
<comment type="cofactor">
    <cofactor evidence="1">
        <name>heme b</name>
        <dbReference type="ChEBI" id="CHEBI:60344"/>
    </cofactor>
    <text evidence="1">Binds 2 heme b (iron-protoporphyrin IX) groups per molecule.</text>
</comment>
<comment type="subcellular location">
    <subcellularLocation>
        <location evidence="3">Cell inner membrane</location>
        <topology evidence="2">Multi-pass membrane protein</topology>
    </subcellularLocation>
</comment>
<comment type="similarity">
    <text evidence="4">Belongs to the cytochrome b561 family.</text>
</comment>
<comment type="sequence caution" evidence="4">
    <conflict type="erroneous initiation">
        <sequence resource="EMBL-CDS" id="BAA06517"/>
    </conflict>
</comment>
<gene>
    <name type="primary">yceJ</name>
    <name type="ordered locus">b1057</name>
    <name type="ordered locus">JW1044</name>
</gene>
<keyword id="KW-0997">Cell inner membrane</keyword>
<keyword id="KW-1003">Cell membrane</keyword>
<keyword id="KW-0249">Electron transport</keyword>
<keyword id="KW-0349">Heme</keyword>
<keyword id="KW-0408">Iron</keyword>
<keyword id="KW-0472">Membrane</keyword>
<keyword id="KW-0479">Metal-binding</keyword>
<keyword id="KW-1185">Reference proteome</keyword>
<keyword id="KW-0812">Transmembrane</keyword>
<keyword id="KW-1133">Transmembrane helix</keyword>
<keyword id="KW-0813">Transport</keyword>